<reference key="1">
    <citation type="journal article" date="1995" name="Science">
        <title>The minimal gene complement of Mycoplasma genitalium.</title>
        <authorList>
            <person name="Fraser C.M."/>
            <person name="Gocayne J.D."/>
            <person name="White O."/>
            <person name="Adams M.D."/>
            <person name="Clayton R.A."/>
            <person name="Fleischmann R.D."/>
            <person name="Bult C.J."/>
            <person name="Kerlavage A.R."/>
            <person name="Sutton G.G."/>
            <person name="Kelley J.M."/>
            <person name="Fritchman J.L."/>
            <person name="Weidman J.F."/>
            <person name="Small K.V."/>
            <person name="Sandusky M."/>
            <person name="Fuhrmann J.L."/>
            <person name="Nguyen D.T."/>
            <person name="Utterback T.R."/>
            <person name="Saudek D.M."/>
            <person name="Phillips C.A."/>
            <person name="Merrick J.M."/>
            <person name="Tomb J.-F."/>
            <person name="Dougherty B.A."/>
            <person name="Bott K.F."/>
            <person name="Hu P.-C."/>
            <person name="Lucier T.S."/>
            <person name="Peterson S.N."/>
            <person name="Smith H.O."/>
            <person name="Hutchison C.A. III"/>
            <person name="Venter J.C."/>
        </authorList>
    </citation>
    <scope>NUCLEOTIDE SEQUENCE [LARGE SCALE GENOMIC DNA]</scope>
    <source>
        <strain>ATCC 33530 / DSM 19775 / NCTC 10195 / G37</strain>
    </source>
</reference>
<name>OPPB_MYCGE</name>
<accession>P47323</accession>
<evidence type="ECO:0000250" key="1">
    <source>
        <dbReference type="UniProtKB" id="P24138"/>
    </source>
</evidence>
<evidence type="ECO:0000255" key="2"/>
<evidence type="ECO:0000255" key="3">
    <source>
        <dbReference type="PROSITE-ProRule" id="PRU00441"/>
    </source>
</evidence>
<evidence type="ECO:0000305" key="4"/>
<sequence>MFKYILKRLGLAVVAMFIVMSIVFFLVNATGNVPLSATSARDIAAVQAQLQEFGFNDPIIVRYFRYWAKLFSFQADALGIYYANPNQTIGEIVFARVPNTLYVVLISFLIGSLLGIFLGMVSGLNRGKFLDAAINVLVVLFVSIPSFVVGLGLLKLAGFLNLPPRFINFDDAFFSFDRFLLASIIPILSLVFYSSAAFTYRIRNEVVEVMNQDYIKTAKSKGLGMFAVARYHIFRNSIIPSIPLFVFGISGAFSGGFIIESLFGVQGVSRILIDSVQVNETNMVMFNILFIQGIPLLASVFIEFIYVLVDPRIRIANSSNVSLLTKLKFLSSRHQWLMKWNKINSDNAQNIVFNSPLHHQLLELNAIDYKTKTVQLTTEQKTALNISATANFILLGNKCLKLKTIHG</sequence>
<gene>
    <name type="primary">oppB</name>
    <name type="ordered locus">MG077</name>
</gene>
<protein>
    <recommendedName>
        <fullName evidence="4">Oligopeptide transport system permease protein OppB</fullName>
    </recommendedName>
</protein>
<keyword id="KW-1003">Cell membrane</keyword>
<keyword id="KW-0472">Membrane</keyword>
<keyword id="KW-0571">Peptide transport</keyword>
<keyword id="KW-0653">Protein transport</keyword>
<keyword id="KW-1185">Reference proteome</keyword>
<keyword id="KW-0812">Transmembrane</keyword>
<keyword id="KW-1133">Transmembrane helix</keyword>
<keyword id="KW-0813">Transport</keyword>
<dbReference type="EMBL" id="L43967">
    <property type="protein sequence ID" value="AAC71295.1"/>
    <property type="molecule type" value="Genomic_DNA"/>
</dbReference>
<dbReference type="PIR" id="E64208">
    <property type="entry name" value="E64208"/>
</dbReference>
<dbReference type="SMR" id="P47323"/>
<dbReference type="FunCoup" id="P47323">
    <property type="interactions" value="92"/>
</dbReference>
<dbReference type="STRING" id="243273.MG_077"/>
<dbReference type="KEGG" id="mge:MG_077"/>
<dbReference type="eggNOG" id="COG0601">
    <property type="taxonomic scope" value="Bacteria"/>
</dbReference>
<dbReference type="HOGENOM" id="CLU_036879_1_2_14"/>
<dbReference type="InParanoid" id="P47323"/>
<dbReference type="Proteomes" id="UP000000807">
    <property type="component" value="Chromosome"/>
</dbReference>
<dbReference type="GO" id="GO:0005886">
    <property type="term" value="C:plasma membrane"/>
    <property type="evidence" value="ECO:0000318"/>
    <property type="project" value="GO_Central"/>
</dbReference>
<dbReference type="GO" id="GO:0022857">
    <property type="term" value="F:transmembrane transporter activity"/>
    <property type="evidence" value="ECO:0000318"/>
    <property type="project" value="GO_Central"/>
</dbReference>
<dbReference type="GO" id="GO:0015833">
    <property type="term" value="P:peptide transport"/>
    <property type="evidence" value="ECO:0007669"/>
    <property type="project" value="UniProtKB-KW"/>
</dbReference>
<dbReference type="GO" id="GO:0015031">
    <property type="term" value="P:protein transport"/>
    <property type="evidence" value="ECO:0007669"/>
    <property type="project" value="UniProtKB-KW"/>
</dbReference>
<dbReference type="CDD" id="cd06261">
    <property type="entry name" value="TM_PBP2"/>
    <property type="match status" value="1"/>
</dbReference>
<dbReference type="Gene3D" id="1.10.3720.10">
    <property type="entry name" value="MetI-like"/>
    <property type="match status" value="1"/>
</dbReference>
<dbReference type="InterPro" id="IPR045621">
    <property type="entry name" value="BPD_transp_1_N"/>
</dbReference>
<dbReference type="InterPro" id="IPR000515">
    <property type="entry name" value="MetI-like"/>
</dbReference>
<dbReference type="InterPro" id="IPR035906">
    <property type="entry name" value="MetI-like_sf"/>
</dbReference>
<dbReference type="PANTHER" id="PTHR30465">
    <property type="entry name" value="INNER MEMBRANE ABC TRANSPORTER"/>
    <property type="match status" value="1"/>
</dbReference>
<dbReference type="PANTHER" id="PTHR30465:SF0">
    <property type="entry name" value="OLIGOPEPTIDE TRANSPORT SYSTEM PERMEASE PROTEIN APPB"/>
    <property type="match status" value="1"/>
</dbReference>
<dbReference type="Pfam" id="PF00528">
    <property type="entry name" value="BPD_transp_1"/>
    <property type="match status" value="1"/>
</dbReference>
<dbReference type="Pfam" id="PF19300">
    <property type="entry name" value="BPD_transp_1_N"/>
    <property type="match status" value="1"/>
</dbReference>
<dbReference type="SUPFAM" id="SSF161098">
    <property type="entry name" value="MetI-like"/>
    <property type="match status" value="1"/>
</dbReference>
<dbReference type="PROSITE" id="PS50928">
    <property type="entry name" value="ABC_TM1"/>
    <property type="match status" value="1"/>
</dbReference>
<proteinExistence type="inferred from homology"/>
<organism>
    <name type="scientific">Mycoplasma genitalium (strain ATCC 33530 / DSM 19775 / NCTC 10195 / G37)</name>
    <name type="common">Mycoplasmoides genitalium</name>
    <dbReference type="NCBI Taxonomy" id="243273"/>
    <lineage>
        <taxon>Bacteria</taxon>
        <taxon>Bacillati</taxon>
        <taxon>Mycoplasmatota</taxon>
        <taxon>Mycoplasmoidales</taxon>
        <taxon>Mycoplasmoidaceae</taxon>
        <taxon>Mycoplasmoides</taxon>
    </lineage>
</organism>
<feature type="chain" id="PRO_0000060139" description="Oligopeptide transport system permease protein OppB">
    <location>
        <begin position="1"/>
        <end position="407"/>
    </location>
</feature>
<feature type="transmembrane region" description="Helical" evidence="3">
    <location>
        <begin position="9"/>
        <end position="29"/>
    </location>
</feature>
<feature type="transmembrane region" description="Helical" evidence="3">
    <location>
        <begin position="101"/>
        <end position="121"/>
    </location>
</feature>
<feature type="transmembrane region" description="Helical" evidence="3">
    <location>
        <begin position="134"/>
        <end position="154"/>
    </location>
</feature>
<feature type="transmembrane region" description="Helical" evidence="3">
    <location>
        <begin position="179"/>
        <end position="199"/>
    </location>
</feature>
<feature type="transmembrane region" description="Helical" evidence="3">
    <location>
        <begin position="238"/>
        <end position="258"/>
    </location>
</feature>
<feature type="transmembrane region" description="Helical" evidence="3">
    <location>
        <begin position="288"/>
        <end position="308"/>
    </location>
</feature>
<feature type="domain" description="ABC transmembrane type-1" evidence="3">
    <location>
        <begin position="97"/>
        <end position="307"/>
    </location>
</feature>
<comment type="function">
    <text evidence="1">Part of the ABC transporter complex OppABCDF involved in the uptake of oligopeptides (By similarity). Probably responsible for the translocation of the substrate across the membrane (By similarity).</text>
</comment>
<comment type="subunit">
    <text evidence="1">The complex is composed of two ATP-binding proteins (OppD and OppF), two transmembrane proteins (OppB and OppC) and a solute-binding protein (OppA).</text>
</comment>
<comment type="subcellular location">
    <subcellularLocation>
        <location evidence="1">Cell membrane</location>
        <topology evidence="2">Multi-pass membrane protein</topology>
    </subcellularLocation>
</comment>
<comment type="similarity">
    <text evidence="4">Belongs to the binding-protein-dependent transport system permease family. OppBC subfamily.</text>
</comment>